<reference key="1">
    <citation type="journal article" date="1994" name="Proc. R. Soc. B">
        <title>Molecular evolution of the family Camelidae: a mitochondrial DNA study.</title>
        <authorList>
            <person name="Stanley H.F."/>
            <person name="Kadwell M."/>
            <person name="Wheeler J.C."/>
        </authorList>
    </citation>
    <scope>NUCLEOTIDE SEQUENCE [GENOMIC DNA]</scope>
</reference>
<proteinExistence type="inferred from homology"/>
<keyword id="KW-0249">Electron transport</keyword>
<keyword id="KW-0349">Heme</keyword>
<keyword id="KW-0408">Iron</keyword>
<keyword id="KW-0472">Membrane</keyword>
<keyword id="KW-0479">Metal-binding</keyword>
<keyword id="KW-0496">Mitochondrion</keyword>
<keyword id="KW-0999">Mitochondrion inner membrane</keyword>
<keyword id="KW-0679">Respiratory chain</keyword>
<keyword id="KW-0812">Transmembrane</keyword>
<keyword id="KW-1133">Transmembrane helix</keyword>
<keyword id="KW-0813">Transport</keyword>
<keyword id="KW-0830">Ubiquinone</keyword>
<feature type="chain" id="PRO_0000061085" description="Cytochrome b">
    <location>
        <begin position="1"/>
        <end position="379"/>
    </location>
</feature>
<feature type="transmembrane region" description="Helical" evidence="2">
    <location>
        <begin position="33"/>
        <end position="53"/>
    </location>
</feature>
<feature type="transmembrane region" description="Helical" evidence="2">
    <location>
        <begin position="77"/>
        <end position="98"/>
    </location>
</feature>
<feature type="transmembrane region" description="Helical" evidence="2">
    <location>
        <begin position="113"/>
        <end position="133"/>
    </location>
</feature>
<feature type="transmembrane region" description="Helical" evidence="2">
    <location>
        <begin position="178"/>
        <end position="198"/>
    </location>
</feature>
<feature type="transmembrane region" description="Helical" evidence="2">
    <location>
        <begin position="226"/>
        <end position="246"/>
    </location>
</feature>
<feature type="transmembrane region" description="Helical" evidence="2">
    <location>
        <begin position="288"/>
        <end position="308"/>
    </location>
</feature>
<feature type="transmembrane region" description="Helical" evidence="2">
    <location>
        <begin position="320"/>
        <end position="340"/>
    </location>
</feature>
<feature type="transmembrane region" description="Helical" evidence="2">
    <location>
        <begin position="347"/>
        <end position="367"/>
    </location>
</feature>
<feature type="binding site" description="axial binding residue" evidence="2">
    <location>
        <position position="83"/>
    </location>
    <ligand>
        <name>heme b</name>
        <dbReference type="ChEBI" id="CHEBI:60344"/>
        <label>b562</label>
    </ligand>
    <ligandPart>
        <name>Fe</name>
        <dbReference type="ChEBI" id="CHEBI:18248"/>
    </ligandPart>
</feature>
<feature type="binding site" description="axial binding residue" evidence="2">
    <location>
        <position position="97"/>
    </location>
    <ligand>
        <name>heme b</name>
        <dbReference type="ChEBI" id="CHEBI:60344"/>
        <label>b566</label>
    </ligand>
    <ligandPart>
        <name>Fe</name>
        <dbReference type="ChEBI" id="CHEBI:18248"/>
    </ligandPart>
</feature>
<feature type="binding site" description="axial binding residue" evidence="2">
    <location>
        <position position="182"/>
    </location>
    <ligand>
        <name>heme b</name>
        <dbReference type="ChEBI" id="CHEBI:60344"/>
        <label>b562</label>
    </ligand>
    <ligandPart>
        <name>Fe</name>
        <dbReference type="ChEBI" id="CHEBI:18248"/>
    </ligandPart>
</feature>
<feature type="binding site" description="axial binding residue" evidence="2">
    <location>
        <position position="196"/>
    </location>
    <ligand>
        <name>heme b</name>
        <dbReference type="ChEBI" id="CHEBI:60344"/>
        <label>b566</label>
    </ligand>
    <ligandPart>
        <name>Fe</name>
        <dbReference type="ChEBI" id="CHEBI:18248"/>
    </ligandPart>
</feature>
<feature type="binding site" evidence="2">
    <location>
        <position position="201"/>
    </location>
    <ligand>
        <name>a ubiquinone</name>
        <dbReference type="ChEBI" id="CHEBI:16389"/>
    </ligand>
</feature>
<geneLocation type="mitochondrion"/>
<name>CYB_LAMGL</name>
<gene>
    <name type="primary">MT-CYB</name>
    <name type="synonym">COB</name>
    <name type="synonym">CYTB</name>
    <name type="synonym">MTCYB</name>
</gene>
<evidence type="ECO:0000250" key="1"/>
<evidence type="ECO:0000250" key="2">
    <source>
        <dbReference type="UniProtKB" id="P00157"/>
    </source>
</evidence>
<evidence type="ECO:0000255" key="3">
    <source>
        <dbReference type="PROSITE-ProRule" id="PRU00967"/>
    </source>
</evidence>
<evidence type="ECO:0000255" key="4">
    <source>
        <dbReference type="PROSITE-ProRule" id="PRU00968"/>
    </source>
</evidence>
<comment type="function">
    <text evidence="2">Component of the ubiquinol-cytochrome c reductase complex (complex III or cytochrome b-c1 complex) that is part of the mitochondrial respiratory chain. The b-c1 complex mediates electron transfer from ubiquinol to cytochrome c. Contributes to the generation of a proton gradient across the mitochondrial membrane that is then used for ATP synthesis.</text>
</comment>
<comment type="cofactor">
    <cofactor evidence="2">
        <name>heme b</name>
        <dbReference type="ChEBI" id="CHEBI:60344"/>
    </cofactor>
    <text evidence="2">Binds 2 heme b groups non-covalently.</text>
</comment>
<comment type="subunit">
    <text evidence="2">The cytochrome bc1 complex contains 11 subunits: 3 respiratory subunits (MT-CYB, CYC1 and UQCRFS1), 2 core proteins (UQCRC1 and UQCRC2) and 6 low-molecular weight proteins (UQCRH/QCR6, UQCRB/QCR7, UQCRQ/QCR8, UQCR10/QCR9, UQCR11/QCR10 and a cleavage product of UQCRFS1). This cytochrome bc1 complex then forms a dimer.</text>
</comment>
<comment type="subcellular location">
    <subcellularLocation>
        <location evidence="2">Mitochondrion inner membrane</location>
        <topology evidence="2">Multi-pass membrane protein</topology>
    </subcellularLocation>
</comment>
<comment type="miscellaneous">
    <text evidence="1">Heme 1 (or BL or b562) is low-potential and absorbs at about 562 nm, and heme 2 (or BH or b566) is high-potential and absorbs at about 566 nm.</text>
</comment>
<comment type="similarity">
    <text evidence="3 4">Belongs to the cytochrome b family.</text>
</comment>
<comment type="caution">
    <text evidence="2">The full-length protein contains only eight transmembrane helices, not nine as predicted by bioinformatics tools.</text>
</comment>
<organism>
    <name type="scientific">Lama glama</name>
    <name type="common">Llama</name>
    <dbReference type="NCBI Taxonomy" id="9844"/>
    <lineage>
        <taxon>Eukaryota</taxon>
        <taxon>Metazoa</taxon>
        <taxon>Chordata</taxon>
        <taxon>Craniata</taxon>
        <taxon>Vertebrata</taxon>
        <taxon>Euteleostomi</taxon>
        <taxon>Mammalia</taxon>
        <taxon>Eutheria</taxon>
        <taxon>Laurasiatheria</taxon>
        <taxon>Artiodactyla</taxon>
        <taxon>Tylopoda</taxon>
        <taxon>Camelidae</taxon>
        <taxon>Lama</taxon>
    </lineage>
</organism>
<dbReference type="EMBL" id="U06429">
    <property type="protein sequence ID" value="AAA21487.1"/>
    <property type="molecule type" value="Genomic_DNA"/>
</dbReference>
<dbReference type="RefSeq" id="YP_002601084.1">
    <property type="nucleotide sequence ID" value="NC_012102.1"/>
</dbReference>
<dbReference type="SMR" id="Q34891"/>
<dbReference type="GeneID" id="7441191"/>
<dbReference type="CTD" id="4519"/>
<dbReference type="GO" id="GO:0005743">
    <property type="term" value="C:mitochondrial inner membrane"/>
    <property type="evidence" value="ECO:0007669"/>
    <property type="project" value="UniProtKB-SubCell"/>
</dbReference>
<dbReference type="GO" id="GO:0045275">
    <property type="term" value="C:respiratory chain complex III"/>
    <property type="evidence" value="ECO:0007669"/>
    <property type="project" value="InterPro"/>
</dbReference>
<dbReference type="GO" id="GO:0046872">
    <property type="term" value="F:metal ion binding"/>
    <property type="evidence" value="ECO:0007669"/>
    <property type="project" value="UniProtKB-KW"/>
</dbReference>
<dbReference type="GO" id="GO:0008121">
    <property type="term" value="F:ubiquinol-cytochrome-c reductase activity"/>
    <property type="evidence" value="ECO:0007669"/>
    <property type="project" value="InterPro"/>
</dbReference>
<dbReference type="GO" id="GO:0006122">
    <property type="term" value="P:mitochondrial electron transport, ubiquinol to cytochrome c"/>
    <property type="evidence" value="ECO:0007669"/>
    <property type="project" value="TreeGrafter"/>
</dbReference>
<dbReference type="CDD" id="cd00290">
    <property type="entry name" value="cytochrome_b_C"/>
    <property type="match status" value="1"/>
</dbReference>
<dbReference type="CDD" id="cd00284">
    <property type="entry name" value="Cytochrome_b_N"/>
    <property type="match status" value="1"/>
</dbReference>
<dbReference type="FunFam" id="1.20.810.10:FF:000002">
    <property type="entry name" value="Cytochrome b"/>
    <property type="match status" value="1"/>
</dbReference>
<dbReference type="Gene3D" id="1.20.810.10">
    <property type="entry name" value="Cytochrome Bc1 Complex, Chain C"/>
    <property type="match status" value="1"/>
</dbReference>
<dbReference type="InterPro" id="IPR005798">
    <property type="entry name" value="Cyt_b/b6_C"/>
</dbReference>
<dbReference type="InterPro" id="IPR036150">
    <property type="entry name" value="Cyt_b/b6_C_sf"/>
</dbReference>
<dbReference type="InterPro" id="IPR005797">
    <property type="entry name" value="Cyt_b/b6_N"/>
</dbReference>
<dbReference type="InterPro" id="IPR027387">
    <property type="entry name" value="Cytb/b6-like_sf"/>
</dbReference>
<dbReference type="InterPro" id="IPR030689">
    <property type="entry name" value="Cytochrome_b"/>
</dbReference>
<dbReference type="InterPro" id="IPR048260">
    <property type="entry name" value="Cytochrome_b_C_euk/bac"/>
</dbReference>
<dbReference type="InterPro" id="IPR048259">
    <property type="entry name" value="Cytochrome_b_N_euk/bac"/>
</dbReference>
<dbReference type="InterPro" id="IPR016174">
    <property type="entry name" value="Di-haem_cyt_TM"/>
</dbReference>
<dbReference type="PANTHER" id="PTHR19271">
    <property type="entry name" value="CYTOCHROME B"/>
    <property type="match status" value="1"/>
</dbReference>
<dbReference type="PANTHER" id="PTHR19271:SF16">
    <property type="entry name" value="CYTOCHROME B"/>
    <property type="match status" value="1"/>
</dbReference>
<dbReference type="Pfam" id="PF00032">
    <property type="entry name" value="Cytochrom_B_C"/>
    <property type="match status" value="1"/>
</dbReference>
<dbReference type="Pfam" id="PF00033">
    <property type="entry name" value="Cytochrome_B"/>
    <property type="match status" value="1"/>
</dbReference>
<dbReference type="PIRSF" id="PIRSF038885">
    <property type="entry name" value="COB"/>
    <property type="match status" value="1"/>
</dbReference>
<dbReference type="SUPFAM" id="SSF81648">
    <property type="entry name" value="a domain/subunit of cytochrome bc1 complex (Ubiquinol-cytochrome c reductase)"/>
    <property type="match status" value="1"/>
</dbReference>
<dbReference type="SUPFAM" id="SSF81342">
    <property type="entry name" value="Transmembrane di-heme cytochromes"/>
    <property type="match status" value="1"/>
</dbReference>
<dbReference type="PROSITE" id="PS51003">
    <property type="entry name" value="CYTB_CTER"/>
    <property type="match status" value="1"/>
</dbReference>
<dbReference type="PROSITE" id="PS51002">
    <property type="entry name" value="CYTB_NTER"/>
    <property type="match status" value="1"/>
</dbReference>
<sequence>MTNIRKSHPLLKIVNNAFIDLPAPSNISSWWNFGSLLGICLIMQIMTGLFLAMHYTSDTTTAFSSVAHICRDVNYGWIIRYLHANGASMFFICLYIHVGRGLYYGSYAFLETWNIGIILLFTVMATAFMGYVLPWGQMSFWGATVITNLLSAIPYVGTTLVEWIWGGFSVDKATLTRFFAFHFILPFVIAALAGVHLLFLHETGSNNPTGISSDMDKIPFHPYYTIKDILGALLLILTLLLLVLFSPDLLGDPDNYTPANPLNTPPHIKPEWYFLFAYAILRSIPNKLGGVLALVLSILILALIPLLHTSKQRSMMFRPISQCLFWTLVADLLTLTWIGGQPVEPPFIMIGQVASILYFSLILILMPVAGIIENHILKW</sequence>
<protein>
    <recommendedName>
        <fullName>Cytochrome b</fullName>
    </recommendedName>
    <alternativeName>
        <fullName>Complex III subunit 3</fullName>
    </alternativeName>
    <alternativeName>
        <fullName>Complex III subunit III</fullName>
    </alternativeName>
    <alternativeName>
        <fullName>Cytochrome b-c1 complex subunit 3</fullName>
    </alternativeName>
    <alternativeName>
        <fullName>Ubiquinol-cytochrome-c reductase complex cytochrome b subunit</fullName>
    </alternativeName>
</protein>
<accession>Q34891</accession>